<sequence>MSIEKIWAREILDSRGNPTVEVDLYTAKGLFRAAVPSGASTGIYEALELRDGDKQRYLGKGVLKAVDHINSRIAPALISSGISVVEQEKLDNLMLELDGTENKSKFGANAILGVSLAVCKAGAAERDLPLYRHIAQLAGNSDLILPVPAFNVINGGSHAGNKLAMQEFMILPVGAESFRDAMRLGAEVYHTLKGVIKDKYGKDATNVGDEGGFAPNILENSEALELVKEAIDKAGYTEKMVIGMDVAASEFYRDGKYDLDFKSPADPSRYITGDQLGALYQDFVRNYPVVSIEDPFDQDDWAAWSKFTANVGIQIVGDDLTVTNPKRIERAVEEKACNCLLLKVNQIGSVTEAIQACKLAQENGWGVMVSHRSGETEDTFIADLVVGLCTGQIKTGAPCRSERLAKYNQLMRIEEELGDEARFAGHNFRNPSVL</sequence>
<name>ENOG_MOUSE</name>
<keyword id="KW-0007">Acetylation</keyword>
<keyword id="KW-1003">Cell membrane</keyword>
<keyword id="KW-0963">Cytoplasm</keyword>
<keyword id="KW-0903">Direct protein sequencing</keyword>
<keyword id="KW-0324">Glycolysis</keyword>
<keyword id="KW-0379">Hydroxylation</keyword>
<keyword id="KW-1017">Isopeptide bond</keyword>
<keyword id="KW-0456">Lyase</keyword>
<keyword id="KW-0460">Magnesium</keyword>
<keyword id="KW-0472">Membrane</keyword>
<keyword id="KW-0479">Metal-binding</keyword>
<keyword id="KW-0597">Phosphoprotein</keyword>
<keyword id="KW-1185">Reference proteome</keyword>
<keyword id="KW-0832">Ubl conjugation</keyword>
<reference key="1">
    <citation type="journal article" date="1990" name="Nucleic Acids Res.">
        <title>Nucleotide sequences of cDNAs alpha and gamma enolase mRNAs from mouse brain.</title>
        <authorList>
            <person name="Kaghad M."/>
            <person name="Dumont X."/>
            <person name="Chalon P."/>
            <person name="Lelias J.M."/>
            <person name="Lamande N."/>
            <person name="Lucas M."/>
            <person name="Lazar M."/>
            <person name="Caput D."/>
        </authorList>
    </citation>
    <scope>NUCLEOTIDE SEQUENCE [MRNA]</scope>
    <source>
        <tissue>Brain</tissue>
    </source>
</reference>
<reference key="2">
    <citation type="journal article" date="1998" name="Genome Res.">
        <title>Comparative sequence analysis of a gene-rich cluster at human chromosome 12p13 and its syntenic region in mouse chromosome 6.</title>
        <authorList>
            <person name="Ansari-Lari M.A."/>
            <person name="Oeltjen J.C."/>
            <person name="Schwartz S."/>
            <person name="Zhang Z."/>
            <person name="Muzny D.M."/>
            <person name="Lu J."/>
            <person name="Gorrell J.H."/>
            <person name="Chinault A.C."/>
            <person name="Belmont J.W."/>
            <person name="Miller W."/>
            <person name="Gibbs R.A."/>
        </authorList>
    </citation>
    <scope>NUCLEOTIDE SEQUENCE [GENOMIC DNA]</scope>
</reference>
<reference key="3">
    <citation type="journal article" date="2004" name="Genome Res.">
        <title>The status, quality, and expansion of the NIH full-length cDNA project: the Mammalian Gene Collection (MGC).</title>
        <authorList>
            <consortium name="The MGC Project Team"/>
        </authorList>
    </citation>
    <scope>NUCLEOTIDE SEQUENCE [LARGE SCALE MRNA]</scope>
    <source>
        <tissue>Retina</tissue>
    </source>
</reference>
<reference key="4">
    <citation type="submission" date="2007-04" db="UniProtKB">
        <authorList>
            <person name="Lubec G."/>
            <person name="Klug S."/>
            <person name="Kang S.U."/>
        </authorList>
    </citation>
    <scope>PROTEIN SEQUENCE OF 16-28; 33-50; 73-89; 104-120; 163-179; 184-193; 203-228; 240-262; 270-285; 307-326; 336-358; 373-394 AND 413-429</scope>
    <scope>IDENTIFICATION BY MASS SPECTROMETRY</scope>
    <source>
        <strain>C57BL/6J</strain>
        <tissue>Brain</tissue>
        <tissue>Hippocampus</tissue>
    </source>
</reference>
<reference key="5">
    <citation type="journal article" date="2000" name="Biol. Cell">
        <title>Fibre-type distribution and subcellular localisation of alpha and beta enolase in mouse striated muscle.</title>
        <authorList>
            <person name="Keller A."/>
            <person name="Demeurie J."/>
            <person name="Merkulova T."/>
            <person name="Geraud G."/>
            <person name="Cywiner-Golenzer C."/>
            <person name="Lucas M."/>
            <person name="Chatelet F.-P."/>
        </authorList>
    </citation>
    <scope>TISSUE SPECIFICITY</scope>
</reference>
<reference key="6">
    <citation type="journal article" date="2010" name="Cell">
        <title>A tissue-specific atlas of mouse protein phosphorylation and expression.</title>
        <authorList>
            <person name="Huttlin E.L."/>
            <person name="Jedrychowski M.P."/>
            <person name="Elias J.E."/>
            <person name="Goswami T."/>
            <person name="Rad R."/>
            <person name="Beausoleil S.A."/>
            <person name="Villen J."/>
            <person name="Haas W."/>
            <person name="Sowa M.E."/>
            <person name="Gygi S.P."/>
        </authorList>
    </citation>
    <scope>IDENTIFICATION BY MASS SPECTROMETRY [LARGE SCALE ANALYSIS]</scope>
    <source>
        <tissue>Brain</tissue>
        <tissue>Brown adipose tissue</tissue>
        <tissue>Liver</tissue>
    </source>
</reference>
<reference key="7">
    <citation type="journal article" date="2013" name="Biol. Reprod.">
        <title>Disruption of a spermatogenic cell-specific mouse enolase 4 (eno4) gene causes sperm structural defects and male infertility.</title>
        <authorList>
            <person name="Nakamura N."/>
            <person name="Dai Q."/>
            <person name="Williams J."/>
            <person name="Goulding E.H."/>
            <person name="Willis W.D."/>
            <person name="Brown P.R."/>
            <person name="Eddy E.M."/>
        </authorList>
    </citation>
    <scope>TISSUE SPECIFICITY</scope>
</reference>
<reference key="8">
    <citation type="journal article" date="2013" name="Proc. Natl. Acad. Sci. U.S.A.">
        <title>Label-free quantitative proteomics of the lysine acetylome in mitochondria identifies substrates of SIRT3 in metabolic pathways.</title>
        <authorList>
            <person name="Rardin M.J."/>
            <person name="Newman J.C."/>
            <person name="Held J.M."/>
            <person name="Cusack M.P."/>
            <person name="Sorensen D.J."/>
            <person name="Li B."/>
            <person name="Schilling B."/>
            <person name="Mooney S.D."/>
            <person name="Kahn C.R."/>
            <person name="Verdin E."/>
            <person name="Gibson B.W."/>
        </authorList>
    </citation>
    <scope>ACETYLATION [LARGE SCALE ANALYSIS] AT LYS-197 AND LYS-199</scope>
    <scope>IDENTIFICATION BY MASS SPECTROMETRY [LARGE SCALE ANALYSIS]</scope>
    <source>
        <tissue>Liver</tissue>
    </source>
</reference>
<evidence type="ECO:0000250" key="1"/>
<evidence type="ECO:0000250" key="2">
    <source>
        <dbReference type="UniProtKB" id="P00924"/>
    </source>
</evidence>
<evidence type="ECO:0000250" key="3">
    <source>
        <dbReference type="UniProtKB" id="P06733"/>
    </source>
</evidence>
<evidence type="ECO:0000250" key="4">
    <source>
        <dbReference type="UniProtKB" id="P09104"/>
    </source>
</evidence>
<evidence type="ECO:0000250" key="5">
    <source>
        <dbReference type="UniProtKB" id="P17182"/>
    </source>
</evidence>
<evidence type="ECO:0000269" key="6">
    <source>
    </source>
</evidence>
<evidence type="ECO:0000305" key="7"/>
<evidence type="ECO:0000305" key="8">
    <source>
    </source>
</evidence>
<evidence type="ECO:0007744" key="9">
    <source>
    </source>
</evidence>
<organism>
    <name type="scientific">Mus musculus</name>
    <name type="common">Mouse</name>
    <dbReference type="NCBI Taxonomy" id="10090"/>
    <lineage>
        <taxon>Eukaryota</taxon>
        <taxon>Metazoa</taxon>
        <taxon>Chordata</taxon>
        <taxon>Craniata</taxon>
        <taxon>Vertebrata</taxon>
        <taxon>Euteleostomi</taxon>
        <taxon>Mammalia</taxon>
        <taxon>Eutheria</taxon>
        <taxon>Euarchontoglires</taxon>
        <taxon>Glires</taxon>
        <taxon>Rodentia</taxon>
        <taxon>Myomorpha</taxon>
        <taxon>Muroidea</taxon>
        <taxon>Muridae</taxon>
        <taxon>Murinae</taxon>
        <taxon>Mus</taxon>
        <taxon>Mus</taxon>
    </lineage>
</organism>
<gene>
    <name type="primary">Eno2</name>
    <name type="synonym">Eno-2</name>
</gene>
<comment type="function">
    <text evidence="1">Has neurotrophic and neuroprotective properties on a broad spectrum of central nervous system (CNS) neurons. Binds, in a calcium-dependent manner, to cultured neocortical neurons and promotes cell survival (By similarity).</text>
</comment>
<comment type="catalytic activity">
    <reaction>
        <text>(2R)-2-phosphoglycerate = phosphoenolpyruvate + H2O</text>
        <dbReference type="Rhea" id="RHEA:10164"/>
        <dbReference type="ChEBI" id="CHEBI:15377"/>
        <dbReference type="ChEBI" id="CHEBI:58289"/>
        <dbReference type="ChEBI" id="CHEBI:58702"/>
        <dbReference type="EC" id="4.2.1.11"/>
    </reaction>
</comment>
<comment type="cofactor">
    <cofactor>
        <name>Mg(2+)</name>
        <dbReference type="ChEBI" id="CHEBI:18420"/>
    </cofactor>
    <text>Mg(2+) is required for catalysis and for stabilizing the dimer.</text>
</comment>
<comment type="pathway">
    <text>Carbohydrate degradation; glycolysis; pyruvate from D-glyceraldehyde 3-phosphate: step 4/5.</text>
</comment>
<comment type="subunit">
    <text>Mammalian enolase is composed of 3 isozyme subunits, alpha, beta and gamma, which can form homodimers or heterodimers which are cell-type and development-specific.</text>
</comment>
<comment type="subcellular location">
    <subcellularLocation>
        <location evidence="1">Cytoplasm</location>
    </subcellularLocation>
    <subcellularLocation>
        <location evidence="1">Cell membrane</location>
    </subcellularLocation>
    <text evidence="1">Can translocate to the plasma membrane in either the homodimeric (alpha/alpha) or heterodimeric (alpha/gamma) form.</text>
</comment>
<comment type="tissue specificity">
    <text evidence="6 8">Skeletal muscle (at protein level). The alpha/alpha homodimer is expressed in embryo and in most adult tissues. The alpha/beta heterodimer and the beta/beta homodimer are found in striated muscle, and the alpha/gamma heterodimer and the gamma/gamma homodimer in neurons.</text>
</comment>
<comment type="developmental stage">
    <text>During ontogenesis, there is a transition from the alpha/alpha homodimer to the alpha/beta heterodimer in striated muscle cells, and to the alpha/gamma heterodimer in nerve cells.</text>
</comment>
<comment type="similarity">
    <text evidence="7">Belongs to the enolase family.</text>
</comment>
<accession>P17183</accession>
<feature type="initiator methionine" description="Removed" evidence="3">
    <location>
        <position position="1"/>
    </location>
</feature>
<feature type="chain" id="PRO_0000134113" description="Gamma-enolase">
    <location>
        <begin position="2"/>
        <end position="434"/>
    </location>
</feature>
<feature type="active site" description="Proton donor" evidence="2">
    <location>
        <position position="210"/>
    </location>
</feature>
<feature type="active site" description="Proton acceptor" evidence="2">
    <location>
        <position position="343"/>
    </location>
</feature>
<feature type="binding site" evidence="3">
    <location>
        <position position="40"/>
    </location>
    <ligand>
        <name>Mg(2+)</name>
        <dbReference type="ChEBI" id="CHEBI:18420"/>
        <label>1</label>
    </ligand>
</feature>
<feature type="binding site" evidence="2">
    <location>
        <position position="158"/>
    </location>
    <ligand>
        <name>substrate</name>
    </ligand>
</feature>
<feature type="binding site" evidence="2">
    <location>
        <position position="167"/>
    </location>
    <ligand>
        <name>substrate</name>
    </ligand>
</feature>
<feature type="binding site" evidence="3">
    <location>
        <position position="245"/>
    </location>
    <ligand>
        <name>Mg(2+)</name>
        <dbReference type="ChEBI" id="CHEBI:18420"/>
        <label>2</label>
    </ligand>
</feature>
<feature type="binding site" evidence="1">
    <location>
        <position position="245"/>
    </location>
    <ligand>
        <name>Mg(2+)</name>
        <dbReference type="ChEBI" id="CHEBI:18420"/>
    </ligand>
</feature>
<feature type="binding site" evidence="3">
    <location>
        <position position="293"/>
    </location>
    <ligand>
        <name>Mg(2+)</name>
        <dbReference type="ChEBI" id="CHEBI:18420"/>
        <label>2</label>
    </ligand>
</feature>
<feature type="binding site" evidence="1">
    <location>
        <position position="293"/>
    </location>
    <ligand>
        <name>Mg(2+)</name>
        <dbReference type="ChEBI" id="CHEBI:18420"/>
    </ligand>
</feature>
<feature type="binding site" evidence="2">
    <location>
        <position position="293"/>
    </location>
    <ligand>
        <name>substrate</name>
    </ligand>
</feature>
<feature type="binding site" evidence="3">
    <location>
        <position position="318"/>
    </location>
    <ligand>
        <name>Mg(2+)</name>
        <dbReference type="ChEBI" id="CHEBI:18420"/>
        <label>2</label>
    </ligand>
</feature>
<feature type="binding site" evidence="1">
    <location>
        <position position="318"/>
    </location>
    <ligand>
        <name>Mg(2+)</name>
        <dbReference type="ChEBI" id="CHEBI:18420"/>
    </ligand>
</feature>
<feature type="binding site" evidence="2">
    <location>
        <position position="318"/>
    </location>
    <ligand>
        <name>substrate</name>
    </ligand>
</feature>
<feature type="binding site" evidence="2">
    <location>
        <begin position="370"/>
        <end position="373"/>
    </location>
    <ligand>
        <name>substrate</name>
    </ligand>
</feature>
<feature type="binding site" evidence="2">
    <location>
        <position position="394"/>
    </location>
    <ligand>
        <name>substrate</name>
    </ligand>
</feature>
<feature type="modified residue" description="N-acetylserine" evidence="3">
    <location>
        <position position="2"/>
    </location>
</feature>
<feature type="modified residue" description="N6-acetyllysine" evidence="3">
    <location>
        <position position="5"/>
    </location>
</feature>
<feature type="modified residue" description="Phosphothreonine" evidence="4">
    <location>
        <position position="26"/>
    </location>
</feature>
<feature type="modified residue" description="Phosphotyrosine" evidence="4">
    <location>
        <position position="44"/>
    </location>
</feature>
<feature type="modified residue" description="N6-acetyllysine; alternate" evidence="5">
    <location>
        <position position="60"/>
    </location>
</feature>
<feature type="modified residue" description="N6-succinyllysine; alternate" evidence="5">
    <location>
        <position position="60"/>
    </location>
</feature>
<feature type="modified residue" description="N6-acetyllysine" evidence="3">
    <location>
        <position position="64"/>
    </location>
</feature>
<feature type="modified residue" description="N6-acetyllysine; alternate" evidence="3">
    <location>
        <position position="89"/>
    </location>
</feature>
<feature type="modified residue" description="N6-succinyllysine; alternate" evidence="5">
    <location>
        <position position="89"/>
    </location>
</feature>
<feature type="modified residue" description="N6-acetyllysine" evidence="3">
    <location>
        <position position="193"/>
    </location>
</feature>
<feature type="modified residue" description="N6-acetyllysine" evidence="9">
    <location>
        <position position="197"/>
    </location>
</feature>
<feature type="modified residue" description="N6-acetyllysine" evidence="9">
    <location>
        <position position="199"/>
    </location>
</feature>
<feature type="modified residue" description="N6-acetyllysine; alternate" evidence="5">
    <location>
        <position position="202"/>
    </location>
</feature>
<feature type="modified residue" description="N6-acetyllysine; alternate" evidence="3">
    <location>
        <position position="228"/>
    </location>
</feature>
<feature type="modified residue" description="N6-succinyllysine; alternate" evidence="5">
    <location>
        <position position="228"/>
    </location>
</feature>
<feature type="modified residue" description="N6-(2-hydroxyisobutyryl)lysine; alternate" evidence="4">
    <location>
        <position position="233"/>
    </location>
</feature>
<feature type="modified residue" description="N6-acetyllysine; alternate" evidence="3">
    <location>
        <position position="233"/>
    </location>
</feature>
<feature type="modified residue" description="N6-acetyllysine" evidence="3">
    <location>
        <position position="256"/>
    </location>
</feature>
<feature type="modified residue" description="Phosphoserine" evidence="4">
    <location>
        <position position="263"/>
    </location>
</feature>
<feature type="modified residue" description="Phosphotyrosine" evidence="3">
    <location>
        <position position="287"/>
    </location>
</feature>
<feature type="modified residue" description="Phosphoserine" evidence="3">
    <location>
        <position position="291"/>
    </location>
</feature>
<feature type="modified residue" description="N6-acetyllysine" evidence="5">
    <location>
        <position position="335"/>
    </location>
</feature>
<feature type="modified residue" description="N6-acetyllysine" evidence="5">
    <location>
        <position position="343"/>
    </location>
</feature>
<feature type="modified residue" description="N6-acetyllysine" evidence="5">
    <location>
        <position position="406"/>
    </location>
</feature>
<feature type="cross-link" description="Glycyl lysine isopeptide (Lys-Gly) (interchain with G-Cter in SUMO2); alternate" evidence="3">
    <location>
        <position position="202"/>
    </location>
</feature>
<dbReference type="EC" id="4.2.1.11"/>
<dbReference type="EMBL" id="X52380">
    <property type="protein sequence ID" value="CAA36606.1"/>
    <property type="molecule type" value="mRNA"/>
</dbReference>
<dbReference type="EMBL" id="AC002397">
    <property type="protein sequence ID" value="AAC36002.1"/>
    <property type="molecule type" value="Genomic_DNA"/>
</dbReference>
<dbReference type="EMBL" id="BC031739">
    <property type="protein sequence ID" value="AAH31739.1"/>
    <property type="molecule type" value="mRNA"/>
</dbReference>
<dbReference type="CCDS" id="CCDS20527.1"/>
<dbReference type="PIR" id="S10247">
    <property type="entry name" value="S10247"/>
</dbReference>
<dbReference type="RefSeq" id="NP_001289571.1">
    <property type="nucleotide sequence ID" value="NM_001302642.1"/>
</dbReference>
<dbReference type="RefSeq" id="NP_001342149.1">
    <property type="nucleotide sequence ID" value="NM_001355220.2"/>
</dbReference>
<dbReference type="RefSeq" id="NP_001396615.1">
    <property type="nucleotide sequence ID" value="NM_001409686.1"/>
</dbReference>
<dbReference type="RefSeq" id="NP_001396616.1">
    <property type="nucleotide sequence ID" value="NM_001409687.1"/>
</dbReference>
<dbReference type="RefSeq" id="NP_001396617.1">
    <property type="nucleotide sequence ID" value="NM_001409688.1"/>
</dbReference>
<dbReference type="RefSeq" id="NP_038537.1">
    <property type="nucleotide sequence ID" value="NM_013509.4"/>
</dbReference>
<dbReference type="RefSeq" id="XP_006505566.1">
    <property type="nucleotide sequence ID" value="XM_006505503.3"/>
</dbReference>
<dbReference type="RefSeq" id="XP_006505567.1">
    <property type="nucleotide sequence ID" value="XM_006505504.2"/>
</dbReference>
<dbReference type="SMR" id="P17183"/>
<dbReference type="BioGRID" id="199452">
    <property type="interactions" value="24"/>
</dbReference>
<dbReference type="FunCoup" id="P17183">
    <property type="interactions" value="1149"/>
</dbReference>
<dbReference type="IntAct" id="P17183">
    <property type="interactions" value="4"/>
</dbReference>
<dbReference type="MINT" id="P17183"/>
<dbReference type="STRING" id="10090.ENSMUSP00000004378"/>
<dbReference type="GlyGen" id="P17183">
    <property type="glycosylation" value="1 site, 1 N-linked glycan (1 site)"/>
</dbReference>
<dbReference type="iPTMnet" id="P17183"/>
<dbReference type="MetOSite" id="P17183"/>
<dbReference type="PhosphoSitePlus" id="P17183"/>
<dbReference type="SwissPalm" id="P17183"/>
<dbReference type="CPTAC" id="non-CPTAC-3313"/>
<dbReference type="jPOST" id="P17183"/>
<dbReference type="PaxDb" id="10090-ENSMUSP00000004378"/>
<dbReference type="PeptideAtlas" id="P17183"/>
<dbReference type="ProteomicsDB" id="277876"/>
<dbReference type="Pumba" id="P17183"/>
<dbReference type="Antibodypedia" id="3514">
    <property type="antibodies" value="2187 antibodies from 53 providers"/>
</dbReference>
<dbReference type="DNASU" id="13807"/>
<dbReference type="Ensembl" id="ENSMUST00000004378.15">
    <property type="protein sequence ID" value="ENSMUSP00000004378.9"/>
    <property type="gene ID" value="ENSMUSG00000004267.17"/>
</dbReference>
<dbReference type="GeneID" id="13807"/>
<dbReference type="KEGG" id="mmu:13807"/>
<dbReference type="UCSC" id="uc009drs.2">
    <property type="organism name" value="mouse"/>
</dbReference>
<dbReference type="AGR" id="MGI:95394"/>
<dbReference type="CTD" id="2026"/>
<dbReference type="MGI" id="MGI:95394">
    <property type="gene designation" value="Eno2"/>
</dbReference>
<dbReference type="VEuPathDB" id="HostDB:ENSMUSG00000004267"/>
<dbReference type="eggNOG" id="KOG2670">
    <property type="taxonomic scope" value="Eukaryota"/>
</dbReference>
<dbReference type="GeneTree" id="ENSGT00950000182805"/>
<dbReference type="HOGENOM" id="CLU_031223_0_0_1"/>
<dbReference type="InParanoid" id="P17183"/>
<dbReference type="OMA" id="RCQLTGD"/>
<dbReference type="OrthoDB" id="1739814at2759"/>
<dbReference type="PhylomeDB" id="P17183"/>
<dbReference type="TreeFam" id="TF300391"/>
<dbReference type="Reactome" id="R-MMU-70171">
    <property type="pathway name" value="Glycolysis"/>
</dbReference>
<dbReference type="Reactome" id="R-MMU-70263">
    <property type="pathway name" value="Gluconeogenesis"/>
</dbReference>
<dbReference type="SABIO-RK" id="P17183"/>
<dbReference type="UniPathway" id="UPA00109">
    <property type="reaction ID" value="UER00187"/>
</dbReference>
<dbReference type="BioGRID-ORCS" id="13807">
    <property type="hits" value="0 hits in 78 CRISPR screens"/>
</dbReference>
<dbReference type="CD-CODE" id="CE726F99">
    <property type="entry name" value="Postsynaptic density"/>
</dbReference>
<dbReference type="ChiTaRS" id="Eno2">
    <property type="organism name" value="mouse"/>
</dbReference>
<dbReference type="PRO" id="PR:P17183"/>
<dbReference type="Proteomes" id="UP000000589">
    <property type="component" value="Chromosome 6"/>
</dbReference>
<dbReference type="RNAct" id="P17183">
    <property type="molecule type" value="protein"/>
</dbReference>
<dbReference type="Bgee" id="ENSMUSG00000004267">
    <property type="expression patterns" value="Expressed in motor neuron and 209 other cell types or tissues"/>
</dbReference>
<dbReference type="ExpressionAtlas" id="P17183">
    <property type="expression patterns" value="baseline and differential"/>
</dbReference>
<dbReference type="GO" id="GO:0005938">
    <property type="term" value="C:cell cortex"/>
    <property type="evidence" value="ECO:0007669"/>
    <property type="project" value="Ensembl"/>
</dbReference>
<dbReference type="GO" id="GO:0009986">
    <property type="term" value="C:cell surface"/>
    <property type="evidence" value="ECO:0007669"/>
    <property type="project" value="Ensembl"/>
</dbReference>
<dbReference type="GO" id="GO:0005737">
    <property type="term" value="C:cytoplasm"/>
    <property type="evidence" value="ECO:0000314"/>
    <property type="project" value="MGI"/>
</dbReference>
<dbReference type="GO" id="GO:0030426">
    <property type="term" value="C:growth cone"/>
    <property type="evidence" value="ECO:0007669"/>
    <property type="project" value="Ensembl"/>
</dbReference>
<dbReference type="GO" id="GO:0045121">
    <property type="term" value="C:membrane raft"/>
    <property type="evidence" value="ECO:0007669"/>
    <property type="project" value="Ensembl"/>
</dbReference>
<dbReference type="GO" id="GO:0043209">
    <property type="term" value="C:myelin sheath"/>
    <property type="evidence" value="ECO:0007005"/>
    <property type="project" value="UniProtKB"/>
</dbReference>
<dbReference type="GO" id="GO:0043025">
    <property type="term" value="C:neuronal cell body"/>
    <property type="evidence" value="ECO:0000314"/>
    <property type="project" value="MGI"/>
</dbReference>
<dbReference type="GO" id="GO:0043204">
    <property type="term" value="C:perikaryon"/>
    <property type="evidence" value="ECO:0000314"/>
    <property type="project" value="MGI"/>
</dbReference>
<dbReference type="GO" id="GO:0000015">
    <property type="term" value="C:phosphopyruvate hydratase complex"/>
    <property type="evidence" value="ECO:0007669"/>
    <property type="project" value="Ensembl"/>
</dbReference>
<dbReference type="GO" id="GO:0001917">
    <property type="term" value="C:photoreceptor inner segment"/>
    <property type="evidence" value="ECO:0000314"/>
    <property type="project" value="MGI"/>
</dbReference>
<dbReference type="GO" id="GO:0097060">
    <property type="term" value="C:synaptic membrane"/>
    <property type="evidence" value="ECO:0007669"/>
    <property type="project" value="Ensembl"/>
</dbReference>
<dbReference type="GO" id="GO:0019899">
    <property type="term" value="F:enzyme binding"/>
    <property type="evidence" value="ECO:0007669"/>
    <property type="project" value="Ensembl"/>
</dbReference>
<dbReference type="GO" id="GO:0042802">
    <property type="term" value="F:identical protein binding"/>
    <property type="evidence" value="ECO:0007669"/>
    <property type="project" value="Ensembl"/>
</dbReference>
<dbReference type="GO" id="GO:0000287">
    <property type="term" value="F:magnesium ion binding"/>
    <property type="evidence" value="ECO:0007669"/>
    <property type="project" value="InterPro"/>
</dbReference>
<dbReference type="GO" id="GO:0004634">
    <property type="term" value="F:phosphopyruvate hydratase activity"/>
    <property type="evidence" value="ECO:0007669"/>
    <property type="project" value="UniProtKB-EC"/>
</dbReference>
<dbReference type="GO" id="GO:0044877">
    <property type="term" value="F:protein-containing complex binding"/>
    <property type="evidence" value="ECO:0007669"/>
    <property type="project" value="Ensembl"/>
</dbReference>
<dbReference type="GO" id="GO:0061621">
    <property type="term" value="P:canonical glycolysis"/>
    <property type="evidence" value="ECO:0007669"/>
    <property type="project" value="Ensembl"/>
</dbReference>
<dbReference type="GO" id="GO:0006094">
    <property type="term" value="P:gluconeogenesis"/>
    <property type="evidence" value="ECO:0007669"/>
    <property type="project" value="Ensembl"/>
</dbReference>
<dbReference type="GO" id="GO:0032355">
    <property type="term" value="P:response to estradiol"/>
    <property type="evidence" value="ECO:0007669"/>
    <property type="project" value="Ensembl"/>
</dbReference>
<dbReference type="GO" id="GO:0009410">
    <property type="term" value="P:response to xenobiotic stimulus"/>
    <property type="evidence" value="ECO:0007669"/>
    <property type="project" value="Ensembl"/>
</dbReference>
<dbReference type="CDD" id="cd03313">
    <property type="entry name" value="enolase"/>
    <property type="match status" value="1"/>
</dbReference>
<dbReference type="FunFam" id="3.30.390.10:FF:000001">
    <property type="entry name" value="Enolase"/>
    <property type="match status" value="1"/>
</dbReference>
<dbReference type="FunFam" id="3.20.20.120:FF:000002">
    <property type="entry name" value="Enolase 1"/>
    <property type="match status" value="1"/>
</dbReference>
<dbReference type="Gene3D" id="3.20.20.120">
    <property type="entry name" value="Enolase-like C-terminal domain"/>
    <property type="match status" value="1"/>
</dbReference>
<dbReference type="Gene3D" id="3.30.390.10">
    <property type="entry name" value="Enolase-like, N-terminal domain"/>
    <property type="match status" value="1"/>
</dbReference>
<dbReference type="HAMAP" id="MF_00318">
    <property type="entry name" value="Enolase"/>
    <property type="match status" value="1"/>
</dbReference>
<dbReference type="InterPro" id="IPR000941">
    <property type="entry name" value="Enolase"/>
</dbReference>
<dbReference type="InterPro" id="IPR036849">
    <property type="entry name" value="Enolase-like_C_sf"/>
</dbReference>
<dbReference type="InterPro" id="IPR029017">
    <property type="entry name" value="Enolase-like_N"/>
</dbReference>
<dbReference type="InterPro" id="IPR020810">
    <property type="entry name" value="Enolase_C"/>
</dbReference>
<dbReference type="InterPro" id="IPR020809">
    <property type="entry name" value="Enolase_CS"/>
</dbReference>
<dbReference type="InterPro" id="IPR020811">
    <property type="entry name" value="Enolase_N"/>
</dbReference>
<dbReference type="NCBIfam" id="TIGR01060">
    <property type="entry name" value="eno"/>
    <property type="match status" value="1"/>
</dbReference>
<dbReference type="PANTHER" id="PTHR11902">
    <property type="entry name" value="ENOLASE"/>
    <property type="match status" value="1"/>
</dbReference>
<dbReference type="PANTHER" id="PTHR11902:SF10">
    <property type="entry name" value="GAMMA-ENOLASE"/>
    <property type="match status" value="1"/>
</dbReference>
<dbReference type="Pfam" id="PF00113">
    <property type="entry name" value="Enolase_C"/>
    <property type="match status" value="1"/>
</dbReference>
<dbReference type="Pfam" id="PF03952">
    <property type="entry name" value="Enolase_N"/>
    <property type="match status" value="1"/>
</dbReference>
<dbReference type="PIRSF" id="PIRSF001400">
    <property type="entry name" value="Enolase"/>
    <property type="match status" value="1"/>
</dbReference>
<dbReference type="PRINTS" id="PR00148">
    <property type="entry name" value="ENOLASE"/>
</dbReference>
<dbReference type="SFLD" id="SFLDS00001">
    <property type="entry name" value="Enolase"/>
    <property type="match status" value="1"/>
</dbReference>
<dbReference type="SFLD" id="SFLDF00002">
    <property type="entry name" value="enolase"/>
    <property type="match status" value="1"/>
</dbReference>
<dbReference type="SMART" id="SM01192">
    <property type="entry name" value="Enolase_C"/>
    <property type="match status" value="1"/>
</dbReference>
<dbReference type="SMART" id="SM01193">
    <property type="entry name" value="Enolase_N"/>
    <property type="match status" value="1"/>
</dbReference>
<dbReference type="SUPFAM" id="SSF51604">
    <property type="entry name" value="Enolase C-terminal domain-like"/>
    <property type="match status" value="1"/>
</dbReference>
<dbReference type="SUPFAM" id="SSF54826">
    <property type="entry name" value="Enolase N-terminal domain-like"/>
    <property type="match status" value="1"/>
</dbReference>
<dbReference type="PROSITE" id="PS00164">
    <property type="entry name" value="ENOLASE"/>
    <property type="match status" value="1"/>
</dbReference>
<proteinExistence type="evidence at protein level"/>
<protein>
    <recommendedName>
        <fullName>Gamma-enolase</fullName>
        <ecNumber>4.2.1.11</ecNumber>
    </recommendedName>
    <alternativeName>
        <fullName>2-phospho-D-glycerate hydro-lyase</fullName>
    </alternativeName>
    <alternativeName>
        <fullName>Enolase 2</fullName>
    </alternativeName>
    <alternativeName>
        <fullName>Neural enolase</fullName>
    </alternativeName>
    <alternativeName>
        <fullName>Neuron-specific enolase</fullName>
        <shortName>NSE</shortName>
    </alternativeName>
</protein>